<keyword id="KW-0249">Electron transport</keyword>
<keyword id="KW-0349">Heme</keyword>
<keyword id="KW-0408">Iron</keyword>
<keyword id="KW-0472">Membrane</keyword>
<keyword id="KW-0479">Metal-binding</keyword>
<keyword id="KW-0496">Mitochondrion</keyword>
<keyword id="KW-0999">Mitochondrion inner membrane</keyword>
<keyword id="KW-0679">Respiratory chain</keyword>
<keyword id="KW-0812">Transmembrane</keyword>
<keyword id="KW-1133">Transmembrane helix</keyword>
<keyword id="KW-0813">Transport</keyword>
<keyword id="KW-0830">Ubiquinone</keyword>
<sequence>MSNQHILLMSNLLPVGSNISTWWNFGSMLLTCLILQIMTGFFLAIHYTANINLAFSSVIHITRDVPYGWIMQNLHAIGASLFFICIYIHIARGLYYGLYLNKEVWLSGTTLLIILMATAFFGYVLPWGQMSFWAATVITNLLTAIPYLGTTLTTWLWGGFSINDPTLTRFFALHFILPFTIISLSSIHIILLHNEGSNNPLGTNSDIDKIPFHPYHTYKDMLMIIIMTAILFLILSFSPNLLNDPENFSKANPLVTPQHIKPEWYFLFAYGILRSIPNKLGGTLALVMSVMILTTAPFTHTSHTRSMMFRPLSQIVFWTLIATFITITWTATKPVEPPFISISQTASIFYFSFFIMNPLLGWTENKIMMMND</sequence>
<reference key="1">
    <citation type="journal article" date="2000" name="Mol. Phylogenet. Evol.">
        <title>Phylogenetic relationships of elapid snakes based on cytochrome b mtDNA sequences.</title>
        <authorList>
            <person name="Slowinski J.B."/>
            <person name="Keogh J.S."/>
        </authorList>
    </citation>
    <scope>NUCLEOTIDE SEQUENCE [GENOMIC DNA]</scope>
</reference>
<feature type="chain" id="PRO_0000061723" description="Cytochrome b">
    <location>
        <begin position="1"/>
        <end position="372"/>
    </location>
</feature>
<feature type="transmembrane region" description="Helical" evidence="2">
    <location>
        <begin position="25"/>
        <end position="45"/>
    </location>
</feature>
<feature type="transmembrane region" description="Helical" evidence="2">
    <location>
        <begin position="69"/>
        <end position="90"/>
    </location>
</feature>
<feature type="transmembrane region" description="Helical" evidence="2">
    <location>
        <begin position="105"/>
        <end position="125"/>
    </location>
</feature>
<feature type="transmembrane region" description="Helical" evidence="2">
    <location>
        <begin position="170"/>
        <end position="190"/>
    </location>
</feature>
<feature type="transmembrane region" description="Helical" evidence="2">
    <location>
        <begin position="218"/>
        <end position="238"/>
    </location>
</feature>
<feature type="transmembrane region" description="Helical" evidence="2">
    <location>
        <begin position="280"/>
        <end position="300"/>
    </location>
</feature>
<feature type="transmembrane region" description="Helical" evidence="2">
    <location>
        <begin position="312"/>
        <end position="332"/>
    </location>
</feature>
<feature type="transmembrane region" description="Helical" evidence="2">
    <location>
        <begin position="339"/>
        <end position="358"/>
    </location>
</feature>
<feature type="binding site" description="axial binding residue" evidence="2">
    <location>
        <position position="75"/>
    </location>
    <ligand>
        <name>heme b</name>
        <dbReference type="ChEBI" id="CHEBI:60344"/>
        <label>b562</label>
    </ligand>
    <ligandPart>
        <name>Fe</name>
        <dbReference type="ChEBI" id="CHEBI:18248"/>
    </ligandPart>
</feature>
<feature type="binding site" description="axial binding residue" evidence="2">
    <location>
        <position position="89"/>
    </location>
    <ligand>
        <name>heme b</name>
        <dbReference type="ChEBI" id="CHEBI:60344"/>
        <label>b566</label>
    </ligand>
    <ligandPart>
        <name>Fe</name>
        <dbReference type="ChEBI" id="CHEBI:18248"/>
    </ligandPart>
</feature>
<feature type="binding site" description="axial binding residue" evidence="2">
    <location>
        <position position="174"/>
    </location>
    <ligand>
        <name>heme b</name>
        <dbReference type="ChEBI" id="CHEBI:60344"/>
        <label>b562</label>
    </ligand>
    <ligandPart>
        <name>Fe</name>
        <dbReference type="ChEBI" id="CHEBI:18248"/>
    </ligandPart>
</feature>
<feature type="binding site" description="axial binding residue" evidence="2">
    <location>
        <position position="188"/>
    </location>
    <ligand>
        <name>heme b</name>
        <dbReference type="ChEBI" id="CHEBI:60344"/>
        <label>b566</label>
    </ligand>
    <ligandPart>
        <name>Fe</name>
        <dbReference type="ChEBI" id="CHEBI:18248"/>
    </ligandPart>
</feature>
<feature type="binding site" evidence="2">
    <location>
        <position position="193"/>
    </location>
    <ligand>
        <name>a ubiquinone</name>
        <dbReference type="ChEBI" id="CHEBI:16389"/>
    </ligand>
</feature>
<gene>
    <name type="primary">MT-CYB</name>
    <name type="synonym">COB</name>
    <name type="synonym">CYTB</name>
    <name type="synonym">MTCYB</name>
</gene>
<accession>Q9MLJ0</accession>
<dbReference type="EMBL" id="AF217838">
    <property type="protein sequence ID" value="AAF37257.1"/>
    <property type="molecule type" value="Genomic_DNA"/>
</dbReference>
<dbReference type="SMR" id="Q9MLJ0"/>
<dbReference type="GO" id="GO:0005743">
    <property type="term" value="C:mitochondrial inner membrane"/>
    <property type="evidence" value="ECO:0007669"/>
    <property type="project" value="UniProtKB-SubCell"/>
</dbReference>
<dbReference type="GO" id="GO:0045275">
    <property type="term" value="C:respiratory chain complex III"/>
    <property type="evidence" value="ECO:0007669"/>
    <property type="project" value="InterPro"/>
</dbReference>
<dbReference type="GO" id="GO:0046872">
    <property type="term" value="F:metal ion binding"/>
    <property type="evidence" value="ECO:0007669"/>
    <property type="project" value="UniProtKB-KW"/>
</dbReference>
<dbReference type="GO" id="GO:0008121">
    <property type="term" value="F:ubiquinol-cytochrome-c reductase activity"/>
    <property type="evidence" value="ECO:0007669"/>
    <property type="project" value="InterPro"/>
</dbReference>
<dbReference type="GO" id="GO:0006122">
    <property type="term" value="P:mitochondrial electron transport, ubiquinol to cytochrome c"/>
    <property type="evidence" value="ECO:0007669"/>
    <property type="project" value="TreeGrafter"/>
</dbReference>
<dbReference type="CDD" id="cd00290">
    <property type="entry name" value="cytochrome_b_C"/>
    <property type="match status" value="1"/>
</dbReference>
<dbReference type="CDD" id="cd00284">
    <property type="entry name" value="Cytochrome_b_N"/>
    <property type="match status" value="1"/>
</dbReference>
<dbReference type="Gene3D" id="1.20.810.10">
    <property type="entry name" value="Cytochrome Bc1 Complex, Chain C"/>
    <property type="match status" value="1"/>
</dbReference>
<dbReference type="InterPro" id="IPR005798">
    <property type="entry name" value="Cyt_b/b6_C"/>
</dbReference>
<dbReference type="InterPro" id="IPR036150">
    <property type="entry name" value="Cyt_b/b6_C_sf"/>
</dbReference>
<dbReference type="InterPro" id="IPR005797">
    <property type="entry name" value="Cyt_b/b6_N"/>
</dbReference>
<dbReference type="InterPro" id="IPR027387">
    <property type="entry name" value="Cytb/b6-like_sf"/>
</dbReference>
<dbReference type="InterPro" id="IPR030689">
    <property type="entry name" value="Cytochrome_b"/>
</dbReference>
<dbReference type="InterPro" id="IPR048260">
    <property type="entry name" value="Cytochrome_b_C_euk/bac"/>
</dbReference>
<dbReference type="InterPro" id="IPR048259">
    <property type="entry name" value="Cytochrome_b_N_euk/bac"/>
</dbReference>
<dbReference type="InterPro" id="IPR016174">
    <property type="entry name" value="Di-haem_cyt_TM"/>
</dbReference>
<dbReference type="PANTHER" id="PTHR19271">
    <property type="entry name" value="CYTOCHROME B"/>
    <property type="match status" value="1"/>
</dbReference>
<dbReference type="PANTHER" id="PTHR19271:SF16">
    <property type="entry name" value="CYTOCHROME B"/>
    <property type="match status" value="1"/>
</dbReference>
<dbReference type="Pfam" id="PF00032">
    <property type="entry name" value="Cytochrom_B_C"/>
    <property type="match status" value="1"/>
</dbReference>
<dbReference type="Pfam" id="PF00033">
    <property type="entry name" value="Cytochrome_B"/>
    <property type="match status" value="1"/>
</dbReference>
<dbReference type="PIRSF" id="PIRSF038885">
    <property type="entry name" value="COB"/>
    <property type="match status" value="1"/>
</dbReference>
<dbReference type="SUPFAM" id="SSF81648">
    <property type="entry name" value="a domain/subunit of cytochrome bc1 complex (Ubiquinol-cytochrome c reductase)"/>
    <property type="match status" value="1"/>
</dbReference>
<dbReference type="SUPFAM" id="SSF81342">
    <property type="entry name" value="Transmembrane di-heme cytochromes"/>
    <property type="match status" value="1"/>
</dbReference>
<dbReference type="PROSITE" id="PS51003">
    <property type="entry name" value="CYTB_CTER"/>
    <property type="match status" value="1"/>
</dbReference>
<dbReference type="PROSITE" id="PS51002">
    <property type="entry name" value="CYTB_NTER"/>
    <property type="match status" value="1"/>
</dbReference>
<comment type="function">
    <text evidence="2">Component of the ubiquinol-cytochrome c reductase complex (complex III or cytochrome b-c1 complex) that is part of the mitochondrial respiratory chain. The b-c1 complex mediates electron transfer from ubiquinol to cytochrome c. Contributes to the generation of a proton gradient across the mitochondrial membrane that is then used for ATP synthesis.</text>
</comment>
<comment type="cofactor">
    <cofactor evidence="2">
        <name>heme b</name>
        <dbReference type="ChEBI" id="CHEBI:60344"/>
    </cofactor>
    <text evidence="2">Binds 2 heme b groups non-covalently.</text>
</comment>
<comment type="subunit">
    <text evidence="2">The cytochrome bc1 complex contains 3 respiratory subunits (MT-CYB, CYC1 and UQCRFS1), 2 core proteins (UQCRC1 and UQCRC2) and probably 6 low-molecular weight proteins.</text>
</comment>
<comment type="subcellular location">
    <subcellularLocation>
        <location evidence="2">Mitochondrion inner membrane</location>
        <topology evidence="2">Multi-pass membrane protein</topology>
    </subcellularLocation>
</comment>
<comment type="miscellaneous">
    <text evidence="1">Heme 1 (or BL or b562) is low-potential and absorbs at about 562 nm, and heme 2 (or BH or b566) is high-potential and absorbs at about 566 nm.</text>
</comment>
<comment type="similarity">
    <text evidence="3 4">Belongs to the cytochrome b family.</text>
</comment>
<comment type="caution">
    <text evidence="2">The full-length protein contains only eight transmembrane helices, not nine as predicted by bioinformatics tools.</text>
</comment>
<protein>
    <recommendedName>
        <fullName>Cytochrome b</fullName>
    </recommendedName>
    <alternativeName>
        <fullName>Complex III subunit 3</fullName>
    </alternativeName>
    <alternativeName>
        <fullName>Complex III subunit III</fullName>
    </alternativeName>
    <alternativeName>
        <fullName>Cytochrome b-c1 complex subunit 3</fullName>
    </alternativeName>
    <alternativeName>
        <fullName>Ubiquinol-cytochrome-c reductase complex cytochrome b subunit</fullName>
    </alternativeName>
</protein>
<geneLocation type="mitochondrion"/>
<organism>
    <name type="scientific">Walterinnesia aegyptia</name>
    <name type="common">Desert black snake</name>
    <dbReference type="NCBI Taxonomy" id="64182"/>
    <lineage>
        <taxon>Eukaryota</taxon>
        <taxon>Metazoa</taxon>
        <taxon>Chordata</taxon>
        <taxon>Craniata</taxon>
        <taxon>Vertebrata</taxon>
        <taxon>Euteleostomi</taxon>
        <taxon>Lepidosauria</taxon>
        <taxon>Squamata</taxon>
        <taxon>Bifurcata</taxon>
        <taxon>Unidentata</taxon>
        <taxon>Episquamata</taxon>
        <taxon>Toxicofera</taxon>
        <taxon>Serpentes</taxon>
        <taxon>Colubroidea</taxon>
        <taxon>Elapidae</taxon>
        <taxon>Elapinae</taxon>
        <taxon>Walterinnesia</taxon>
    </lineage>
</organism>
<proteinExistence type="inferred from homology"/>
<evidence type="ECO:0000250" key="1"/>
<evidence type="ECO:0000250" key="2">
    <source>
        <dbReference type="UniProtKB" id="P00157"/>
    </source>
</evidence>
<evidence type="ECO:0000255" key="3">
    <source>
        <dbReference type="PROSITE-ProRule" id="PRU00967"/>
    </source>
</evidence>
<evidence type="ECO:0000255" key="4">
    <source>
        <dbReference type="PROSITE-ProRule" id="PRU00968"/>
    </source>
</evidence>
<name>CYB_WALAE</name>